<dbReference type="EMBL" id="AK044723">
    <property type="protein sequence ID" value="BAC32050.1"/>
    <property type="molecule type" value="mRNA"/>
</dbReference>
<dbReference type="EMBL" id="BC137641">
    <property type="protein sequence ID" value="AAI37642.1"/>
    <property type="molecule type" value="mRNA"/>
</dbReference>
<dbReference type="EMBL" id="BC137655">
    <property type="protein sequence ID" value="AAI37656.1"/>
    <property type="molecule type" value="mRNA"/>
</dbReference>
<dbReference type="EMBL" id="L20336">
    <property type="protein sequence ID" value="AAA16848.1"/>
    <property type="molecule type" value="mRNA"/>
</dbReference>
<dbReference type="CCDS" id="CCDS26524.1"/>
<dbReference type="RefSeq" id="NP_001278730.1">
    <property type="nucleotide sequence ID" value="NM_001291801.1"/>
</dbReference>
<dbReference type="RefSeq" id="NP_034206.1">
    <property type="nucleotide sequence ID" value="NM_010076.3"/>
</dbReference>
<dbReference type="SMR" id="Q61616"/>
<dbReference type="BioGRID" id="199305">
    <property type="interactions" value="2"/>
</dbReference>
<dbReference type="CORUM" id="Q61616"/>
<dbReference type="FunCoup" id="Q61616">
    <property type="interactions" value="1182"/>
</dbReference>
<dbReference type="STRING" id="10090.ENSMUSP00000021932"/>
<dbReference type="BindingDB" id="Q61616"/>
<dbReference type="ChEMBL" id="CHEMBL3071"/>
<dbReference type="DrugCentral" id="Q61616"/>
<dbReference type="GuidetoPHARMACOLOGY" id="214"/>
<dbReference type="GlyCosmos" id="Q61616">
    <property type="glycosylation" value="1 site, No reported glycans"/>
</dbReference>
<dbReference type="GlyGen" id="Q61616">
    <property type="glycosylation" value="3 sites, 1 N-linked glycan (1 site)"/>
</dbReference>
<dbReference type="iPTMnet" id="Q61616"/>
<dbReference type="PhosphoSitePlus" id="Q61616"/>
<dbReference type="SwissPalm" id="Q61616"/>
<dbReference type="PaxDb" id="10090-ENSMUSP00000021932"/>
<dbReference type="ProteomicsDB" id="277404"/>
<dbReference type="Antibodypedia" id="2811">
    <property type="antibodies" value="639 antibodies from 42 providers"/>
</dbReference>
<dbReference type="DNASU" id="13488"/>
<dbReference type="Ensembl" id="ENSMUST00000021932.6">
    <property type="protein sequence ID" value="ENSMUSP00000021932.6"/>
    <property type="gene ID" value="ENSMUSG00000021478.7"/>
</dbReference>
<dbReference type="GeneID" id="13488"/>
<dbReference type="KEGG" id="mmu:13488"/>
<dbReference type="UCSC" id="uc011yzm.3">
    <property type="organism name" value="mouse"/>
</dbReference>
<dbReference type="AGR" id="MGI:99578"/>
<dbReference type="CTD" id="1812"/>
<dbReference type="MGI" id="MGI:99578">
    <property type="gene designation" value="Drd1"/>
</dbReference>
<dbReference type="VEuPathDB" id="HostDB:ENSMUSG00000021478"/>
<dbReference type="eggNOG" id="KOG3656">
    <property type="taxonomic scope" value="Eukaryota"/>
</dbReference>
<dbReference type="GeneTree" id="ENSGT00940000155857"/>
<dbReference type="HOGENOM" id="CLU_009579_11_0_1"/>
<dbReference type="InParanoid" id="Q61616"/>
<dbReference type="OMA" id="THNGQHP"/>
<dbReference type="OrthoDB" id="6021915at2759"/>
<dbReference type="PhylomeDB" id="Q61616"/>
<dbReference type="TreeFam" id="TF325181"/>
<dbReference type="Reactome" id="R-MMU-390651">
    <property type="pathway name" value="Dopamine receptors"/>
</dbReference>
<dbReference type="Reactome" id="R-MMU-418555">
    <property type="pathway name" value="G alpha (s) signalling events"/>
</dbReference>
<dbReference type="BioGRID-ORCS" id="13488">
    <property type="hits" value="2 hits in 77 CRISPR screens"/>
</dbReference>
<dbReference type="PRO" id="PR:Q61616"/>
<dbReference type="Proteomes" id="UP000000589">
    <property type="component" value="Chromosome 13"/>
</dbReference>
<dbReference type="RNAct" id="Q61616">
    <property type="molecule type" value="protein"/>
</dbReference>
<dbReference type="Bgee" id="ENSMUSG00000021478">
    <property type="expression patterns" value="Expressed in nucleus accumbens and 82 other cell types or tissues"/>
</dbReference>
<dbReference type="ExpressionAtlas" id="Q61616">
    <property type="expression patterns" value="baseline and differential"/>
</dbReference>
<dbReference type="GO" id="GO:0060170">
    <property type="term" value="C:ciliary membrane"/>
    <property type="evidence" value="ECO:0007669"/>
    <property type="project" value="UniProtKB-SubCell"/>
</dbReference>
<dbReference type="GO" id="GO:0005929">
    <property type="term" value="C:cilium"/>
    <property type="evidence" value="ECO:0000266"/>
    <property type="project" value="MGI"/>
</dbReference>
<dbReference type="GO" id="GO:0043197">
    <property type="term" value="C:dendritic spine"/>
    <property type="evidence" value="ECO:0000314"/>
    <property type="project" value="UniProtKB"/>
</dbReference>
<dbReference type="GO" id="GO:0012505">
    <property type="term" value="C:endomembrane system"/>
    <property type="evidence" value="ECO:0000314"/>
    <property type="project" value="MGI"/>
</dbReference>
<dbReference type="GO" id="GO:0005783">
    <property type="term" value="C:endoplasmic reticulum"/>
    <property type="evidence" value="ECO:0000314"/>
    <property type="project" value="MGI"/>
</dbReference>
<dbReference type="GO" id="GO:0005789">
    <property type="term" value="C:endoplasmic reticulum membrane"/>
    <property type="evidence" value="ECO:0007669"/>
    <property type="project" value="UniProtKB-SubCell"/>
</dbReference>
<dbReference type="GO" id="GO:0097648">
    <property type="term" value="C:G protein-coupled receptor complex"/>
    <property type="evidence" value="ECO:0007669"/>
    <property type="project" value="Ensembl"/>
</dbReference>
<dbReference type="GO" id="GO:0098982">
    <property type="term" value="C:GABA-ergic synapse"/>
    <property type="evidence" value="ECO:0000314"/>
    <property type="project" value="SynGO"/>
</dbReference>
<dbReference type="GO" id="GO:0098978">
    <property type="term" value="C:glutamatergic synapse"/>
    <property type="evidence" value="ECO:0000314"/>
    <property type="project" value="SynGO"/>
</dbReference>
<dbReference type="GO" id="GO:0016020">
    <property type="term" value="C:membrane"/>
    <property type="evidence" value="ECO:0000314"/>
    <property type="project" value="MGI"/>
</dbReference>
<dbReference type="GO" id="GO:0097730">
    <property type="term" value="C:non-motile cilium"/>
    <property type="evidence" value="ECO:0007669"/>
    <property type="project" value="Ensembl"/>
</dbReference>
<dbReference type="GO" id="GO:0005634">
    <property type="term" value="C:nucleus"/>
    <property type="evidence" value="ECO:0000314"/>
    <property type="project" value="MGI"/>
</dbReference>
<dbReference type="GO" id="GO:0005886">
    <property type="term" value="C:plasma membrane"/>
    <property type="evidence" value="ECO:0000314"/>
    <property type="project" value="MGI"/>
</dbReference>
<dbReference type="GO" id="GO:0045211">
    <property type="term" value="C:postsynaptic membrane"/>
    <property type="evidence" value="ECO:0000314"/>
    <property type="project" value="SynGO"/>
</dbReference>
<dbReference type="GO" id="GO:0042734">
    <property type="term" value="C:presynaptic membrane"/>
    <property type="evidence" value="ECO:0000314"/>
    <property type="project" value="SynGO"/>
</dbReference>
<dbReference type="GO" id="GO:1990763">
    <property type="term" value="F:arrestin family protein binding"/>
    <property type="evidence" value="ECO:0007669"/>
    <property type="project" value="Ensembl"/>
</dbReference>
<dbReference type="GO" id="GO:0035240">
    <property type="term" value="F:dopamine binding"/>
    <property type="evidence" value="ECO:0007669"/>
    <property type="project" value="Ensembl"/>
</dbReference>
<dbReference type="GO" id="GO:0004952">
    <property type="term" value="F:dopamine neurotransmitter receptor activity"/>
    <property type="evidence" value="ECO:0000314"/>
    <property type="project" value="MGI"/>
</dbReference>
<dbReference type="GO" id="GO:0001588">
    <property type="term" value="F:dopamine neurotransmitter receptor activity, coupled via Gs"/>
    <property type="evidence" value="ECO:0000314"/>
    <property type="project" value="MGI"/>
</dbReference>
<dbReference type="GO" id="GO:0004930">
    <property type="term" value="F:G protein-coupled receptor activity"/>
    <property type="evidence" value="ECO:0000314"/>
    <property type="project" value="MGI"/>
</dbReference>
<dbReference type="GO" id="GO:0001965">
    <property type="term" value="F:G-protein alpha-subunit binding"/>
    <property type="evidence" value="ECO:0007669"/>
    <property type="project" value="Ensembl"/>
</dbReference>
<dbReference type="GO" id="GO:0032795">
    <property type="term" value="F:heterotrimeric G-protein binding"/>
    <property type="evidence" value="ECO:0007669"/>
    <property type="project" value="Ensembl"/>
</dbReference>
<dbReference type="GO" id="GO:0007191">
    <property type="term" value="P:adenylate cyclase-activating dopamine receptor signaling pathway"/>
    <property type="evidence" value="ECO:0000314"/>
    <property type="project" value="UniProtKB"/>
</dbReference>
<dbReference type="GO" id="GO:0007628">
    <property type="term" value="P:adult walking behavior"/>
    <property type="evidence" value="ECO:0000315"/>
    <property type="project" value="MGI"/>
</dbReference>
<dbReference type="GO" id="GO:0008306">
    <property type="term" value="P:associative learning"/>
    <property type="evidence" value="ECO:0000315"/>
    <property type="project" value="MGI"/>
</dbReference>
<dbReference type="GO" id="GO:0014002">
    <property type="term" value="P:astrocyte development"/>
    <property type="evidence" value="ECO:0000315"/>
    <property type="project" value="MGI"/>
</dbReference>
<dbReference type="GO" id="GO:0001662">
    <property type="term" value="P:behavioral fear response"/>
    <property type="evidence" value="ECO:0000315"/>
    <property type="project" value="MGI"/>
</dbReference>
<dbReference type="GO" id="GO:0048148">
    <property type="term" value="P:behavioral response to cocaine"/>
    <property type="evidence" value="ECO:0000315"/>
    <property type="project" value="MGI"/>
</dbReference>
<dbReference type="GO" id="GO:0016477">
    <property type="term" value="P:cell migration"/>
    <property type="evidence" value="ECO:0000315"/>
    <property type="project" value="MGI"/>
</dbReference>
<dbReference type="GO" id="GO:0021853">
    <property type="term" value="P:cerebral cortex GABAergic interneuron migration"/>
    <property type="evidence" value="ECO:0000315"/>
    <property type="project" value="MGI"/>
</dbReference>
<dbReference type="GO" id="GO:0001661">
    <property type="term" value="P:conditioned taste aversion"/>
    <property type="evidence" value="ECO:0000315"/>
    <property type="project" value="MGI"/>
</dbReference>
<dbReference type="GO" id="GO:0046323">
    <property type="term" value="P:D-glucose import"/>
    <property type="evidence" value="ECO:0000315"/>
    <property type="project" value="MGI"/>
</dbReference>
<dbReference type="GO" id="GO:0021542">
    <property type="term" value="P:dentate gyrus development"/>
    <property type="evidence" value="ECO:0000315"/>
    <property type="project" value="MGI"/>
</dbReference>
<dbReference type="GO" id="GO:0015872">
    <property type="term" value="P:dopamine transport"/>
    <property type="evidence" value="ECO:0000315"/>
    <property type="project" value="MGI"/>
</dbReference>
<dbReference type="GO" id="GO:0007631">
    <property type="term" value="P:feeding behavior"/>
    <property type="evidence" value="ECO:0000316"/>
    <property type="project" value="MGI"/>
</dbReference>
<dbReference type="GO" id="GO:0007212">
    <property type="term" value="P:G protein-coupled dopamine receptor signaling pathway"/>
    <property type="evidence" value="ECO:0000315"/>
    <property type="project" value="MGI"/>
</dbReference>
<dbReference type="GO" id="GO:0007186">
    <property type="term" value="P:G protein-coupled receptor signaling pathway"/>
    <property type="evidence" value="ECO:0000314"/>
    <property type="project" value="MGI"/>
</dbReference>
<dbReference type="GO" id="GO:0007187">
    <property type="term" value="P:G protein-coupled receptor signaling pathway, coupled to cyclic nucleotide second messenger"/>
    <property type="evidence" value="ECO:0007669"/>
    <property type="project" value="Ensembl"/>
</dbReference>
<dbReference type="GO" id="GO:0007625">
    <property type="term" value="P:grooming behavior"/>
    <property type="evidence" value="ECO:0000315"/>
    <property type="project" value="MGI"/>
</dbReference>
<dbReference type="GO" id="GO:0046959">
    <property type="term" value="P:habituation"/>
    <property type="evidence" value="ECO:0000315"/>
    <property type="project" value="MGI"/>
</dbReference>
<dbReference type="GO" id="GO:0021766">
    <property type="term" value="P:hippocampus development"/>
    <property type="evidence" value="ECO:0000315"/>
    <property type="project" value="MGI"/>
</dbReference>
<dbReference type="GO" id="GO:0007612">
    <property type="term" value="P:learning"/>
    <property type="evidence" value="ECO:0000315"/>
    <property type="project" value="MGI"/>
</dbReference>
<dbReference type="GO" id="GO:0007626">
    <property type="term" value="P:locomotory behavior"/>
    <property type="evidence" value="ECO:0000315"/>
    <property type="project" value="MGI"/>
</dbReference>
<dbReference type="GO" id="GO:0060292">
    <property type="term" value="P:long-term synaptic depression"/>
    <property type="evidence" value="ECO:0000315"/>
    <property type="project" value="MGI"/>
</dbReference>
<dbReference type="GO" id="GO:0060291">
    <property type="term" value="P:long-term synaptic potentiation"/>
    <property type="evidence" value="ECO:0000315"/>
    <property type="project" value="MGI"/>
</dbReference>
<dbReference type="GO" id="GO:0042711">
    <property type="term" value="P:maternal behavior"/>
    <property type="evidence" value="ECO:0000315"/>
    <property type="project" value="MGI"/>
</dbReference>
<dbReference type="GO" id="GO:0007617">
    <property type="term" value="P:mating behavior"/>
    <property type="evidence" value="ECO:0000314"/>
    <property type="project" value="MGI"/>
</dbReference>
<dbReference type="GO" id="GO:0007613">
    <property type="term" value="P:memory"/>
    <property type="evidence" value="ECO:0000315"/>
    <property type="project" value="MGI"/>
</dbReference>
<dbReference type="GO" id="GO:0099010">
    <property type="term" value="P:modification of postsynaptic structure"/>
    <property type="evidence" value="ECO:0000314"/>
    <property type="project" value="SynGO"/>
</dbReference>
<dbReference type="GO" id="GO:0006936">
    <property type="term" value="P:muscle contraction"/>
    <property type="evidence" value="ECO:0000315"/>
    <property type="project" value="MGI"/>
</dbReference>
<dbReference type="GO" id="GO:0001764">
    <property type="term" value="P:neuron migration"/>
    <property type="evidence" value="ECO:0000315"/>
    <property type="project" value="MGI"/>
</dbReference>
<dbReference type="GO" id="GO:0019228">
    <property type="term" value="P:neuronal action potential"/>
    <property type="evidence" value="ECO:0000315"/>
    <property type="project" value="MGI"/>
</dbReference>
<dbReference type="GO" id="GO:0035106">
    <property type="term" value="P:operant conditioning"/>
    <property type="evidence" value="ECO:0000315"/>
    <property type="project" value="MGI"/>
</dbReference>
<dbReference type="GO" id="GO:0030432">
    <property type="term" value="P:peristalsis"/>
    <property type="evidence" value="ECO:0000316"/>
    <property type="project" value="MGI"/>
</dbReference>
<dbReference type="GO" id="GO:0060158">
    <property type="term" value="P:phospholipase C-activating dopamine receptor signaling pathway"/>
    <property type="evidence" value="ECO:0000314"/>
    <property type="project" value="MGI"/>
</dbReference>
<dbReference type="GO" id="GO:2001224">
    <property type="term" value="P:positive regulation of neuron migration"/>
    <property type="evidence" value="ECO:0000315"/>
    <property type="project" value="MGI"/>
</dbReference>
<dbReference type="GO" id="GO:0051281">
    <property type="term" value="P:positive regulation of release of sequestered calcium ion into cytosol"/>
    <property type="evidence" value="ECO:0007669"/>
    <property type="project" value="Ensembl"/>
</dbReference>
<dbReference type="GO" id="GO:0051968">
    <property type="term" value="P:positive regulation of synaptic transmission, glutamatergic"/>
    <property type="evidence" value="ECO:0000315"/>
    <property type="project" value="MGI"/>
</dbReference>
<dbReference type="GO" id="GO:0099171">
    <property type="term" value="P:presynaptic modulation of chemical synaptic transmission"/>
    <property type="evidence" value="ECO:0000314"/>
    <property type="project" value="SynGO"/>
</dbReference>
<dbReference type="GO" id="GO:0006606">
    <property type="term" value="P:protein import into nucleus"/>
    <property type="evidence" value="ECO:0000315"/>
    <property type="project" value="MGI"/>
</dbReference>
<dbReference type="GO" id="GO:0042053">
    <property type="term" value="P:regulation of dopamine metabolic process"/>
    <property type="evidence" value="ECO:0000315"/>
    <property type="project" value="MGI"/>
</dbReference>
<dbReference type="GO" id="GO:0001975">
    <property type="term" value="P:response to amphetamine"/>
    <property type="evidence" value="ECO:0000315"/>
    <property type="project" value="MGI"/>
</dbReference>
<dbReference type="GO" id="GO:0042220">
    <property type="term" value="P:response to cocaine"/>
    <property type="evidence" value="ECO:0000315"/>
    <property type="project" value="MGI"/>
</dbReference>
<dbReference type="GO" id="GO:0009410">
    <property type="term" value="P:response to xenobiotic stimulus"/>
    <property type="evidence" value="ECO:0000314"/>
    <property type="project" value="MGI"/>
</dbReference>
<dbReference type="GO" id="GO:0046960">
    <property type="term" value="P:sensitization"/>
    <property type="evidence" value="ECO:0000316"/>
    <property type="project" value="MGI"/>
</dbReference>
<dbReference type="GO" id="GO:0021756">
    <property type="term" value="P:striatum development"/>
    <property type="evidence" value="ECO:0000315"/>
    <property type="project" value="MGI"/>
</dbReference>
<dbReference type="GO" id="GO:0001963">
    <property type="term" value="P:synaptic transmission, dopaminergic"/>
    <property type="evidence" value="ECO:0000315"/>
    <property type="project" value="MGI"/>
</dbReference>
<dbReference type="GO" id="GO:0035249">
    <property type="term" value="P:synaptic transmission, glutamatergic"/>
    <property type="evidence" value="ECO:0000315"/>
    <property type="project" value="MGI"/>
</dbReference>
<dbReference type="GO" id="GO:0001659">
    <property type="term" value="P:temperature homeostasis"/>
    <property type="evidence" value="ECO:0000315"/>
    <property type="project" value="MGI"/>
</dbReference>
<dbReference type="GO" id="GO:0019226">
    <property type="term" value="P:transmission of nerve impulse"/>
    <property type="evidence" value="ECO:0000315"/>
    <property type="project" value="MGI"/>
</dbReference>
<dbReference type="GO" id="GO:0042311">
    <property type="term" value="P:vasodilation"/>
    <property type="evidence" value="ECO:0007669"/>
    <property type="project" value="InterPro"/>
</dbReference>
<dbReference type="GO" id="GO:0008542">
    <property type="term" value="P:visual learning"/>
    <property type="evidence" value="ECO:0000315"/>
    <property type="project" value="MGI"/>
</dbReference>
<dbReference type="FunFam" id="1.20.1070.10:FF:000045">
    <property type="entry name" value="D(1A) dopamine receptor"/>
    <property type="match status" value="1"/>
</dbReference>
<dbReference type="Gene3D" id="1.20.1070.10">
    <property type="entry name" value="Rhodopsin 7-helix transmembrane proteins"/>
    <property type="match status" value="1"/>
</dbReference>
<dbReference type="InterPro" id="IPR001413">
    <property type="entry name" value="Dopamine_D1_rcpt"/>
</dbReference>
<dbReference type="InterPro" id="IPR000929">
    <property type="entry name" value="Dopamine_rcpt"/>
</dbReference>
<dbReference type="InterPro" id="IPR000276">
    <property type="entry name" value="GPCR_Rhodpsn"/>
</dbReference>
<dbReference type="InterPro" id="IPR017452">
    <property type="entry name" value="GPCR_Rhodpsn_7TM"/>
</dbReference>
<dbReference type="PANTHER" id="PTHR24248">
    <property type="entry name" value="ADRENERGIC RECEPTOR-RELATED G-PROTEIN COUPLED RECEPTOR"/>
    <property type="match status" value="1"/>
</dbReference>
<dbReference type="PANTHER" id="PTHR24248:SF139">
    <property type="entry name" value="D(1A) DOPAMINE RECEPTOR"/>
    <property type="match status" value="1"/>
</dbReference>
<dbReference type="Pfam" id="PF00001">
    <property type="entry name" value="7tm_1"/>
    <property type="match status" value="1"/>
</dbReference>
<dbReference type="PRINTS" id="PR00565">
    <property type="entry name" value="DOPAMINED1AR"/>
</dbReference>
<dbReference type="PRINTS" id="PR00242">
    <property type="entry name" value="DOPAMINER"/>
</dbReference>
<dbReference type="PRINTS" id="PR00237">
    <property type="entry name" value="GPCRRHODOPSN"/>
</dbReference>
<dbReference type="SMART" id="SM01381">
    <property type="entry name" value="7TM_GPCR_Srsx"/>
    <property type="match status" value="1"/>
</dbReference>
<dbReference type="SUPFAM" id="SSF81321">
    <property type="entry name" value="Family A G protein-coupled receptor-like"/>
    <property type="match status" value="1"/>
</dbReference>
<dbReference type="PROSITE" id="PS00237">
    <property type="entry name" value="G_PROTEIN_RECEP_F1_1"/>
    <property type="match status" value="1"/>
</dbReference>
<dbReference type="PROSITE" id="PS50262">
    <property type="entry name" value="G_PROTEIN_RECEP_F1_2"/>
    <property type="match status" value="1"/>
</dbReference>
<proteinExistence type="evidence at protein level"/>
<organism>
    <name type="scientific">Mus musculus</name>
    <name type="common">Mouse</name>
    <dbReference type="NCBI Taxonomy" id="10090"/>
    <lineage>
        <taxon>Eukaryota</taxon>
        <taxon>Metazoa</taxon>
        <taxon>Chordata</taxon>
        <taxon>Craniata</taxon>
        <taxon>Vertebrata</taxon>
        <taxon>Euteleostomi</taxon>
        <taxon>Mammalia</taxon>
        <taxon>Eutheria</taxon>
        <taxon>Euarchontoglires</taxon>
        <taxon>Glires</taxon>
        <taxon>Rodentia</taxon>
        <taxon>Myomorpha</taxon>
        <taxon>Muroidea</taxon>
        <taxon>Muridae</taxon>
        <taxon>Murinae</taxon>
        <taxon>Mus</taxon>
        <taxon>Mus</taxon>
    </lineage>
</organism>
<reference key="1">
    <citation type="journal article" date="2005" name="Science">
        <title>The transcriptional landscape of the mammalian genome.</title>
        <authorList>
            <person name="Carninci P."/>
            <person name="Kasukawa T."/>
            <person name="Katayama S."/>
            <person name="Gough J."/>
            <person name="Frith M.C."/>
            <person name="Maeda N."/>
            <person name="Oyama R."/>
            <person name="Ravasi T."/>
            <person name="Lenhard B."/>
            <person name="Wells C."/>
            <person name="Kodzius R."/>
            <person name="Shimokawa K."/>
            <person name="Bajic V.B."/>
            <person name="Brenner S.E."/>
            <person name="Batalov S."/>
            <person name="Forrest A.R."/>
            <person name="Zavolan M."/>
            <person name="Davis M.J."/>
            <person name="Wilming L.G."/>
            <person name="Aidinis V."/>
            <person name="Allen J.E."/>
            <person name="Ambesi-Impiombato A."/>
            <person name="Apweiler R."/>
            <person name="Aturaliya R.N."/>
            <person name="Bailey T.L."/>
            <person name="Bansal M."/>
            <person name="Baxter L."/>
            <person name="Beisel K.W."/>
            <person name="Bersano T."/>
            <person name="Bono H."/>
            <person name="Chalk A.M."/>
            <person name="Chiu K.P."/>
            <person name="Choudhary V."/>
            <person name="Christoffels A."/>
            <person name="Clutterbuck D.R."/>
            <person name="Crowe M.L."/>
            <person name="Dalla E."/>
            <person name="Dalrymple B.P."/>
            <person name="de Bono B."/>
            <person name="Della Gatta G."/>
            <person name="di Bernardo D."/>
            <person name="Down T."/>
            <person name="Engstrom P."/>
            <person name="Fagiolini M."/>
            <person name="Faulkner G."/>
            <person name="Fletcher C.F."/>
            <person name="Fukushima T."/>
            <person name="Furuno M."/>
            <person name="Futaki S."/>
            <person name="Gariboldi M."/>
            <person name="Georgii-Hemming P."/>
            <person name="Gingeras T.R."/>
            <person name="Gojobori T."/>
            <person name="Green R.E."/>
            <person name="Gustincich S."/>
            <person name="Harbers M."/>
            <person name="Hayashi Y."/>
            <person name="Hensch T.K."/>
            <person name="Hirokawa N."/>
            <person name="Hill D."/>
            <person name="Huminiecki L."/>
            <person name="Iacono M."/>
            <person name="Ikeo K."/>
            <person name="Iwama A."/>
            <person name="Ishikawa T."/>
            <person name="Jakt M."/>
            <person name="Kanapin A."/>
            <person name="Katoh M."/>
            <person name="Kawasawa Y."/>
            <person name="Kelso J."/>
            <person name="Kitamura H."/>
            <person name="Kitano H."/>
            <person name="Kollias G."/>
            <person name="Krishnan S.P."/>
            <person name="Kruger A."/>
            <person name="Kummerfeld S.K."/>
            <person name="Kurochkin I.V."/>
            <person name="Lareau L.F."/>
            <person name="Lazarevic D."/>
            <person name="Lipovich L."/>
            <person name="Liu J."/>
            <person name="Liuni S."/>
            <person name="McWilliam S."/>
            <person name="Madan Babu M."/>
            <person name="Madera M."/>
            <person name="Marchionni L."/>
            <person name="Matsuda H."/>
            <person name="Matsuzawa S."/>
            <person name="Miki H."/>
            <person name="Mignone F."/>
            <person name="Miyake S."/>
            <person name="Morris K."/>
            <person name="Mottagui-Tabar S."/>
            <person name="Mulder N."/>
            <person name="Nakano N."/>
            <person name="Nakauchi H."/>
            <person name="Ng P."/>
            <person name="Nilsson R."/>
            <person name="Nishiguchi S."/>
            <person name="Nishikawa S."/>
            <person name="Nori F."/>
            <person name="Ohara O."/>
            <person name="Okazaki Y."/>
            <person name="Orlando V."/>
            <person name="Pang K.C."/>
            <person name="Pavan W.J."/>
            <person name="Pavesi G."/>
            <person name="Pesole G."/>
            <person name="Petrovsky N."/>
            <person name="Piazza S."/>
            <person name="Reed J."/>
            <person name="Reid J.F."/>
            <person name="Ring B.Z."/>
            <person name="Ringwald M."/>
            <person name="Rost B."/>
            <person name="Ruan Y."/>
            <person name="Salzberg S.L."/>
            <person name="Sandelin A."/>
            <person name="Schneider C."/>
            <person name="Schoenbach C."/>
            <person name="Sekiguchi K."/>
            <person name="Semple C.A."/>
            <person name="Seno S."/>
            <person name="Sessa L."/>
            <person name="Sheng Y."/>
            <person name="Shibata Y."/>
            <person name="Shimada H."/>
            <person name="Shimada K."/>
            <person name="Silva D."/>
            <person name="Sinclair B."/>
            <person name="Sperling S."/>
            <person name="Stupka E."/>
            <person name="Sugiura K."/>
            <person name="Sultana R."/>
            <person name="Takenaka Y."/>
            <person name="Taki K."/>
            <person name="Tammoja K."/>
            <person name="Tan S.L."/>
            <person name="Tang S."/>
            <person name="Taylor M.S."/>
            <person name="Tegner J."/>
            <person name="Teichmann S.A."/>
            <person name="Ueda H.R."/>
            <person name="van Nimwegen E."/>
            <person name="Verardo R."/>
            <person name="Wei C.L."/>
            <person name="Yagi K."/>
            <person name="Yamanishi H."/>
            <person name="Zabarovsky E."/>
            <person name="Zhu S."/>
            <person name="Zimmer A."/>
            <person name="Hide W."/>
            <person name="Bult C."/>
            <person name="Grimmond S.M."/>
            <person name="Teasdale R.D."/>
            <person name="Liu E.T."/>
            <person name="Brusic V."/>
            <person name="Quackenbush J."/>
            <person name="Wahlestedt C."/>
            <person name="Mattick J.S."/>
            <person name="Hume D.A."/>
            <person name="Kai C."/>
            <person name="Sasaki D."/>
            <person name="Tomaru Y."/>
            <person name="Fukuda S."/>
            <person name="Kanamori-Katayama M."/>
            <person name="Suzuki M."/>
            <person name="Aoki J."/>
            <person name="Arakawa T."/>
            <person name="Iida J."/>
            <person name="Imamura K."/>
            <person name="Itoh M."/>
            <person name="Kato T."/>
            <person name="Kawaji H."/>
            <person name="Kawagashira N."/>
            <person name="Kawashima T."/>
            <person name="Kojima M."/>
            <person name="Kondo S."/>
            <person name="Konno H."/>
            <person name="Nakano K."/>
            <person name="Ninomiya N."/>
            <person name="Nishio T."/>
            <person name="Okada M."/>
            <person name="Plessy C."/>
            <person name="Shibata K."/>
            <person name="Shiraki T."/>
            <person name="Suzuki S."/>
            <person name="Tagami M."/>
            <person name="Waki K."/>
            <person name="Watahiki A."/>
            <person name="Okamura-Oho Y."/>
            <person name="Suzuki H."/>
            <person name="Kawai J."/>
            <person name="Hayashizaki Y."/>
        </authorList>
    </citation>
    <scope>NUCLEOTIDE SEQUENCE [LARGE SCALE MRNA]</scope>
    <source>
        <strain>C57BL/6J</strain>
        <tissue>Retina</tissue>
    </source>
</reference>
<reference key="2">
    <citation type="journal article" date="2004" name="Genome Res.">
        <title>The status, quality, and expansion of the NIH full-length cDNA project: the Mammalian Gene Collection (MGC).</title>
        <authorList>
            <consortium name="The MGC Project Team"/>
        </authorList>
    </citation>
    <scope>NUCLEOTIDE SEQUENCE [LARGE SCALE MRNA]</scope>
    <source>
        <tissue>Brain</tissue>
    </source>
</reference>
<reference key="3">
    <citation type="journal article" date="1993" name="Genomics">
        <title>Identification, chromosomal location, and genome organization of mammalian G-protein-coupled receptors.</title>
        <authorList>
            <person name="Wilkie T.M."/>
            <person name="Chen Y."/>
            <person name="Gilbert D.J."/>
            <person name="Moore K.J."/>
            <person name="Yu L."/>
            <person name="Simon M.I."/>
            <person name="Copeland N.G."/>
            <person name="Jenkins N.A."/>
        </authorList>
    </citation>
    <scope>NUCLEOTIDE SEQUENCE [MRNA] OF 193-279</scope>
    <source>
        <tissue>Testis</tissue>
    </source>
</reference>
<reference key="4">
    <citation type="journal article" date="2010" name="Cell">
        <title>A tissue-specific atlas of mouse protein phosphorylation and expression.</title>
        <authorList>
            <person name="Huttlin E.L."/>
            <person name="Jedrychowski M.P."/>
            <person name="Elias J.E."/>
            <person name="Goswami T."/>
            <person name="Rad R."/>
            <person name="Beausoleil S.A."/>
            <person name="Villen J."/>
            <person name="Haas W."/>
            <person name="Sowa M.E."/>
            <person name="Gygi S.P."/>
        </authorList>
    </citation>
    <scope>PHOSPHORYLATION [LARGE SCALE ANALYSIS] AT SER-441</scope>
    <scope>IDENTIFICATION BY MASS SPECTROMETRY [LARGE SCALE ANALYSIS]</scope>
    <source>
        <tissue>Brain</tissue>
    </source>
</reference>
<reference key="5">
    <citation type="journal article" date="2015" name="J. Neurochem.">
        <title>Drebrin depletion alters neurotransmitter receptor levels in protein complexes, dendritic spine morphogenesis and memory-related synaptic plasticity in the mouse hippocampus.</title>
        <authorList>
            <person name="Jung G."/>
            <person name="Kim E.J."/>
            <person name="Cicvaric A."/>
            <person name="Sase S."/>
            <person name="Groeger M."/>
            <person name="Hoeger H."/>
            <person name="Sialana F.J."/>
            <person name="Berger J."/>
            <person name="Monje F.J."/>
            <person name="Lubec G."/>
        </authorList>
    </citation>
    <scope>INTERACTION WITH DRD2</scope>
    <scope>SUBCELLULAR LOCATION</scope>
</reference>
<reference key="6">
    <citation type="journal article" date="2023" name="CNS Neurosci. Ther.">
        <title>Gm527 deficiency in dentate gyrus improves memory through upregulating dopamine D1 receptor pathway.</title>
        <authorList>
            <person name="Jia J."/>
            <person name="Peng H."/>
            <person name="Tian R."/>
            <person name="Zhou H."/>
            <person name="Zheng H."/>
            <person name="Liu B."/>
            <person name="Lu Y."/>
        </authorList>
    </citation>
    <scope>INTERACTION WITH DORIP1</scope>
</reference>
<protein>
    <recommendedName>
        <fullName>D(1A) dopamine receptor</fullName>
    </recommendedName>
    <alternativeName>
        <fullName>Dopamine D1 receptor</fullName>
    </alternativeName>
</protein>
<accession>Q61616</accession>
<accession>B2RPW8</accession>
<accession>Q8C8P8</accession>
<sequence length="446" mass="49612">MAPNTSTMDETGLPVERDFSFRILTACFLSLLILSTLLGNTLVCAAVIRFRHLRSKVTNFFVISLAVSDLLVAVLVMPWKAVAEIAGFWPFGSFCNIWVAFDIMCSTASILNLCVISVDRYWAISSPFQYERKMTPKAAFILISVAWTLSVLISFIPVQLSWHKAKPTWPLDGNFTSLEDAEDDNCDTRLSRTYAISSSLISFYIPVAIMIVTYTSIYRIAQKQIRRISALERAAVHAKNCQTTTGNGNPVECSQSESSFKMSFKRETKVLKTLSVIMGVFVCCWLPFFISNCMVPFCGSEETQPFCIDSITFDVFVWFGWANSSLNPIIYAFNADFQKAFSTLLGCYRLCPTTNNAIETVSINNNGAVMFSSHHEPRGSISKDCNLVYLIPHAVGSSEDLKREEAGGIPKPLEKLSPALSVILDYDTDVSLEKIQPVTHSGQHST</sequence>
<comment type="function">
    <text>Dopamine receptor whose activity is mediated by G proteins which activate adenylyl cyclase.</text>
</comment>
<comment type="subunit">
    <text evidence="1 5 6">Interacts with DNAJC14 via its C-terminus (By similarity). Interacts with DRD2 (PubMed:25865831). Interacts with DORIP1 (PubMed:15489334).</text>
</comment>
<comment type="subcellular location">
    <subcellularLocation>
        <location evidence="1">Cell membrane</location>
        <topology evidence="1">Multi-pass membrane protein</topology>
    </subcellularLocation>
    <subcellularLocation>
        <location evidence="1">Endoplasmic reticulum membrane</location>
        <topology evidence="1">Multi-pass membrane protein</topology>
    </subcellularLocation>
    <subcellularLocation>
        <location evidence="2">Cell projection</location>
        <location evidence="2">Cilium membrane</location>
        <topology evidence="3">Multi-pass membrane protein</topology>
    </subcellularLocation>
    <subcellularLocation>
        <location evidence="6">Cell projection</location>
        <location evidence="6">Dendrite</location>
    </subcellularLocation>
    <subcellularLocation>
        <location evidence="6">Cell projection</location>
        <location evidence="6">Dendritic spine</location>
    </subcellularLocation>
    <text evidence="1">Transport from the endoplasmic reticulum to the cell surface is regulated by interaction with DNAJC14.</text>
</comment>
<comment type="similarity">
    <text evidence="4">Belongs to the G-protein coupled receptor 1 family.</text>
</comment>
<evidence type="ECO:0000250" key="1">
    <source>
        <dbReference type="UniProtKB" id="P18901"/>
    </source>
</evidence>
<evidence type="ECO:0000250" key="2">
    <source>
        <dbReference type="UniProtKB" id="P21728"/>
    </source>
</evidence>
<evidence type="ECO:0000255" key="3"/>
<evidence type="ECO:0000255" key="4">
    <source>
        <dbReference type="PROSITE-ProRule" id="PRU00521"/>
    </source>
</evidence>
<evidence type="ECO:0000269" key="5">
    <source>
    </source>
</evidence>
<evidence type="ECO:0000269" key="6">
    <source>
    </source>
</evidence>
<evidence type="ECO:0000305" key="7"/>
<evidence type="ECO:0007744" key="8">
    <source>
    </source>
</evidence>
<name>DRD1_MOUSE</name>
<feature type="chain" id="PRO_0000069375" description="D(1A) dopamine receptor">
    <location>
        <begin position="1"/>
        <end position="446"/>
    </location>
</feature>
<feature type="topological domain" description="Extracellular" evidence="3">
    <location>
        <begin position="1"/>
        <end position="22"/>
    </location>
</feature>
<feature type="transmembrane region" description="Helical; Name=1" evidence="3">
    <location>
        <begin position="23"/>
        <end position="48"/>
    </location>
</feature>
<feature type="topological domain" description="Cytoplasmic" evidence="3">
    <location>
        <begin position="49"/>
        <end position="59"/>
    </location>
</feature>
<feature type="transmembrane region" description="Helical; Name=2" evidence="3">
    <location>
        <begin position="60"/>
        <end position="86"/>
    </location>
</feature>
<feature type="topological domain" description="Extracellular" evidence="3">
    <location>
        <begin position="87"/>
        <end position="95"/>
    </location>
</feature>
<feature type="transmembrane region" description="Helical; Name=3" evidence="3">
    <location>
        <begin position="96"/>
        <end position="118"/>
    </location>
</feature>
<feature type="topological domain" description="Cytoplasmic" evidence="3">
    <location>
        <begin position="119"/>
        <end position="137"/>
    </location>
</feature>
<feature type="transmembrane region" description="Helical; Name=4" evidence="3">
    <location>
        <begin position="138"/>
        <end position="162"/>
    </location>
</feature>
<feature type="topological domain" description="Extracellular" evidence="3">
    <location>
        <begin position="163"/>
        <end position="192"/>
    </location>
</feature>
<feature type="transmembrane region" description="Helical; Name=5" evidence="3">
    <location>
        <begin position="193"/>
        <end position="218"/>
    </location>
</feature>
<feature type="topological domain" description="Cytoplasmic" evidence="3">
    <location>
        <begin position="219"/>
        <end position="272"/>
    </location>
</feature>
<feature type="transmembrane region" description="Helical; Name=6" evidence="3">
    <location>
        <begin position="273"/>
        <end position="299"/>
    </location>
</feature>
<feature type="topological domain" description="Extracellular" evidence="3">
    <location>
        <begin position="300"/>
        <end position="312"/>
    </location>
</feature>
<feature type="transmembrane region" description="Helical; Name=7" evidence="3">
    <location>
        <begin position="313"/>
        <end position="337"/>
    </location>
</feature>
<feature type="topological domain" description="Cytoplasmic" evidence="3">
    <location>
        <begin position="338"/>
        <end position="446"/>
    </location>
</feature>
<feature type="modified residue" description="Phosphoserine" evidence="8">
    <location>
        <position position="441"/>
    </location>
</feature>
<feature type="lipid moiety-binding region" description="S-palmitoyl cysteine" evidence="2">
    <location>
        <position position="347"/>
    </location>
</feature>
<feature type="lipid moiety-binding region" description="S-palmitoyl cysteine" evidence="2">
    <location>
        <position position="351"/>
    </location>
</feature>
<feature type="glycosylation site" description="N-linked (GlcNAc...) asparagine" evidence="3">
    <location>
        <position position="4"/>
    </location>
</feature>
<feature type="disulfide bond" evidence="4">
    <location>
        <begin position="95"/>
        <end position="186"/>
    </location>
</feature>
<feature type="sequence conflict" description="In Ref. 3." evidence="7" ref="3">
    <original>TYAI</original>
    <variation>DIRH</variation>
    <location>
        <begin position="193"/>
        <end position="196"/>
    </location>
</feature>
<feature type="sequence conflict" description="In Ref. 3; AAA16848." evidence="7" ref="3">
    <original>N</original>
    <variation>S</variation>
    <location>
        <position position="240"/>
    </location>
</feature>
<keyword id="KW-1003">Cell membrane</keyword>
<keyword id="KW-0966">Cell projection</keyword>
<keyword id="KW-1015">Disulfide bond</keyword>
<keyword id="KW-0256">Endoplasmic reticulum</keyword>
<keyword id="KW-0297">G-protein coupled receptor</keyword>
<keyword id="KW-0325">Glycoprotein</keyword>
<keyword id="KW-0449">Lipoprotein</keyword>
<keyword id="KW-0472">Membrane</keyword>
<keyword id="KW-0564">Palmitate</keyword>
<keyword id="KW-0597">Phosphoprotein</keyword>
<keyword id="KW-0675">Receptor</keyword>
<keyword id="KW-1185">Reference proteome</keyword>
<keyword id="KW-0770">Synapse</keyword>
<keyword id="KW-0807">Transducer</keyword>
<keyword id="KW-0812">Transmembrane</keyword>
<keyword id="KW-1133">Transmembrane helix</keyword>
<gene>
    <name type="primary">Drd1</name>
    <name type="synonym">Drd1a</name>
    <name type="synonym">Gpcr15</name>
</gene>